<dbReference type="EMBL" id="BX640431">
    <property type="protein sequence ID" value="CAE37889.1"/>
    <property type="molecule type" value="Genomic_DNA"/>
</dbReference>
<dbReference type="RefSeq" id="WP_003812832.1">
    <property type="nucleotide sequence ID" value="NC_002928.3"/>
</dbReference>
<dbReference type="SMR" id="Q7W7C8"/>
<dbReference type="GeneID" id="93204380"/>
<dbReference type="KEGG" id="bpa:BPP2597"/>
<dbReference type="HOGENOM" id="CLU_123265_0_1_4"/>
<dbReference type="Proteomes" id="UP000001421">
    <property type="component" value="Chromosome"/>
</dbReference>
<dbReference type="GO" id="GO:1990904">
    <property type="term" value="C:ribonucleoprotein complex"/>
    <property type="evidence" value="ECO:0007669"/>
    <property type="project" value="UniProtKB-KW"/>
</dbReference>
<dbReference type="GO" id="GO:0005840">
    <property type="term" value="C:ribosome"/>
    <property type="evidence" value="ECO:0007669"/>
    <property type="project" value="UniProtKB-KW"/>
</dbReference>
<dbReference type="GO" id="GO:0019843">
    <property type="term" value="F:rRNA binding"/>
    <property type="evidence" value="ECO:0007669"/>
    <property type="project" value="UniProtKB-UniRule"/>
</dbReference>
<dbReference type="GO" id="GO:0003735">
    <property type="term" value="F:structural constituent of ribosome"/>
    <property type="evidence" value="ECO:0007669"/>
    <property type="project" value="InterPro"/>
</dbReference>
<dbReference type="GO" id="GO:0000027">
    <property type="term" value="P:ribosomal large subunit assembly"/>
    <property type="evidence" value="ECO:0007669"/>
    <property type="project" value="UniProtKB-UniRule"/>
</dbReference>
<dbReference type="GO" id="GO:0006412">
    <property type="term" value="P:translation"/>
    <property type="evidence" value="ECO:0007669"/>
    <property type="project" value="InterPro"/>
</dbReference>
<dbReference type="CDD" id="cd07026">
    <property type="entry name" value="Ribosomal_L20"/>
    <property type="match status" value="1"/>
</dbReference>
<dbReference type="FunFam" id="1.10.1900.20:FF:000001">
    <property type="entry name" value="50S ribosomal protein L20"/>
    <property type="match status" value="1"/>
</dbReference>
<dbReference type="Gene3D" id="6.10.160.10">
    <property type="match status" value="1"/>
</dbReference>
<dbReference type="Gene3D" id="1.10.1900.20">
    <property type="entry name" value="Ribosomal protein L20"/>
    <property type="match status" value="1"/>
</dbReference>
<dbReference type="HAMAP" id="MF_00382">
    <property type="entry name" value="Ribosomal_bL20"/>
    <property type="match status" value="1"/>
</dbReference>
<dbReference type="InterPro" id="IPR005813">
    <property type="entry name" value="Ribosomal_bL20"/>
</dbReference>
<dbReference type="InterPro" id="IPR049946">
    <property type="entry name" value="RIBOSOMAL_L20_CS"/>
</dbReference>
<dbReference type="InterPro" id="IPR035566">
    <property type="entry name" value="Ribosomal_protein_bL20_C"/>
</dbReference>
<dbReference type="NCBIfam" id="TIGR01032">
    <property type="entry name" value="rplT_bact"/>
    <property type="match status" value="1"/>
</dbReference>
<dbReference type="PANTHER" id="PTHR10986">
    <property type="entry name" value="39S RIBOSOMAL PROTEIN L20"/>
    <property type="match status" value="1"/>
</dbReference>
<dbReference type="Pfam" id="PF00453">
    <property type="entry name" value="Ribosomal_L20"/>
    <property type="match status" value="1"/>
</dbReference>
<dbReference type="PRINTS" id="PR00062">
    <property type="entry name" value="RIBOSOMALL20"/>
</dbReference>
<dbReference type="SUPFAM" id="SSF74731">
    <property type="entry name" value="Ribosomal protein L20"/>
    <property type="match status" value="1"/>
</dbReference>
<dbReference type="PROSITE" id="PS00937">
    <property type="entry name" value="RIBOSOMAL_L20"/>
    <property type="match status" value="1"/>
</dbReference>
<accession>Q7W7C8</accession>
<sequence>MPRVKRGVTARARHKKVIAAAKGYRGRRGNVFRIAKQAVMRAGQYAYRDRRNKKRTFRALWITRINAAVREQGMSYSVFIAGLKKAAIELDRKVLADLAVRDKAGFAAIVQQAKAALAA</sequence>
<proteinExistence type="inferred from homology"/>
<protein>
    <recommendedName>
        <fullName evidence="1">Large ribosomal subunit protein bL20</fullName>
    </recommendedName>
    <alternativeName>
        <fullName evidence="2">50S ribosomal protein L20</fullName>
    </alternativeName>
</protein>
<keyword id="KW-0687">Ribonucleoprotein</keyword>
<keyword id="KW-0689">Ribosomal protein</keyword>
<keyword id="KW-0694">RNA-binding</keyword>
<keyword id="KW-0699">rRNA-binding</keyword>
<feature type="chain" id="PRO_0000177127" description="Large ribosomal subunit protein bL20">
    <location>
        <begin position="1"/>
        <end position="119"/>
    </location>
</feature>
<name>RL20_BORPA</name>
<comment type="function">
    <text evidence="1">Binds directly to 23S ribosomal RNA and is necessary for the in vitro assembly process of the 50S ribosomal subunit. It is not involved in the protein synthesizing functions of that subunit.</text>
</comment>
<comment type="similarity">
    <text evidence="1">Belongs to the bacterial ribosomal protein bL20 family.</text>
</comment>
<organism>
    <name type="scientific">Bordetella parapertussis (strain 12822 / ATCC BAA-587 / NCTC 13253)</name>
    <dbReference type="NCBI Taxonomy" id="257311"/>
    <lineage>
        <taxon>Bacteria</taxon>
        <taxon>Pseudomonadati</taxon>
        <taxon>Pseudomonadota</taxon>
        <taxon>Betaproteobacteria</taxon>
        <taxon>Burkholderiales</taxon>
        <taxon>Alcaligenaceae</taxon>
        <taxon>Bordetella</taxon>
    </lineage>
</organism>
<reference key="1">
    <citation type="journal article" date="2003" name="Nat. Genet.">
        <title>Comparative analysis of the genome sequences of Bordetella pertussis, Bordetella parapertussis and Bordetella bronchiseptica.</title>
        <authorList>
            <person name="Parkhill J."/>
            <person name="Sebaihia M."/>
            <person name="Preston A."/>
            <person name="Murphy L.D."/>
            <person name="Thomson N.R."/>
            <person name="Harris D.E."/>
            <person name="Holden M.T.G."/>
            <person name="Churcher C.M."/>
            <person name="Bentley S.D."/>
            <person name="Mungall K.L."/>
            <person name="Cerdeno-Tarraga A.-M."/>
            <person name="Temple L."/>
            <person name="James K.D."/>
            <person name="Harris B."/>
            <person name="Quail M.A."/>
            <person name="Achtman M."/>
            <person name="Atkin R."/>
            <person name="Baker S."/>
            <person name="Basham D."/>
            <person name="Bason N."/>
            <person name="Cherevach I."/>
            <person name="Chillingworth T."/>
            <person name="Collins M."/>
            <person name="Cronin A."/>
            <person name="Davis P."/>
            <person name="Doggett J."/>
            <person name="Feltwell T."/>
            <person name="Goble A."/>
            <person name="Hamlin N."/>
            <person name="Hauser H."/>
            <person name="Holroyd S."/>
            <person name="Jagels K."/>
            <person name="Leather S."/>
            <person name="Moule S."/>
            <person name="Norberczak H."/>
            <person name="O'Neil S."/>
            <person name="Ormond D."/>
            <person name="Price C."/>
            <person name="Rabbinowitsch E."/>
            <person name="Rutter S."/>
            <person name="Sanders M."/>
            <person name="Saunders D."/>
            <person name="Seeger K."/>
            <person name="Sharp S."/>
            <person name="Simmonds M."/>
            <person name="Skelton J."/>
            <person name="Squares R."/>
            <person name="Squares S."/>
            <person name="Stevens K."/>
            <person name="Unwin L."/>
            <person name="Whitehead S."/>
            <person name="Barrell B.G."/>
            <person name="Maskell D.J."/>
        </authorList>
    </citation>
    <scope>NUCLEOTIDE SEQUENCE [LARGE SCALE GENOMIC DNA]</scope>
    <source>
        <strain>12822 / ATCC BAA-587 / NCTC 13253</strain>
    </source>
</reference>
<evidence type="ECO:0000255" key="1">
    <source>
        <dbReference type="HAMAP-Rule" id="MF_00382"/>
    </source>
</evidence>
<evidence type="ECO:0000305" key="2"/>
<gene>
    <name evidence="1" type="primary">rplT</name>
    <name type="ordered locus">BPP2597</name>
</gene>